<reference key="1">
    <citation type="submission" date="2006-12" db="EMBL/GenBank/DDBJ databases">
        <title>Complete sequence of Acidovorax avenae subsp. citrulli AAC00-1.</title>
        <authorList>
            <person name="Copeland A."/>
            <person name="Lucas S."/>
            <person name="Lapidus A."/>
            <person name="Barry K."/>
            <person name="Detter J.C."/>
            <person name="Glavina del Rio T."/>
            <person name="Dalin E."/>
            <person name="Tice H."/>
            <person name="Pitluck S."/>
            <person name="Kiss H."/>
            <person name="Brettin T."/>
            <person name="Bruce D."/>
            <person name="Han C."/>
            <person name="Tapia R."/>
            <person name="Gilna P."/>
            <person name="Schmutz J."/>
            <person name="Larimer F."/>
            <person name="Land M."/>
            <person name="Hauser L."/>
            <person name="Kyrpides N."/>
            <person name="Kim E."/>
            <person name="Stahl D."/>
            <person name="Richardson P."/>
        </authorList>
    </citation>
    <scope>NUCLEOTIDE SEQUENCE [LARGE SCALE GENOMIC DNA]</scope>
    <source>
        <strain>AAC00-1</strain>
    </source>
</reference>
<organism>
    <name type="scientific">Paracidovorax citrulli (strain AAC00-1)</name>
    <name type="common">Acidovorax citrulli</name>
    <dbReference type="NCBI Taxonomy" id="397945"/>
    <lineage>
        <taxon>Bacteria</taxon>
        <taxon>Pseudomonadati</taxon>
        <taxon>Pseudomonadota</taxon>
        <taxon>Betaproteobacteria</taxon>
        <taxon>Burkholderiales</taxon>
        <taxon>Comamonadaceae</taxon>
        <taxon>Paracidovorax</taxon>
    </lineage>
</organism>
<keyword id="KW-0997">Cell inner membrane</keyword>
<keyword id="KW-1003">Cell membrane</keyword>
<keyword id="KW-0378">Hydrolase</keyword>
<keyword id="KW-0472">Membrane</keyword>
<keyword id="KW-0479">Metal-binding</keyword>
<keyword id="KW-0482">Metalloprotease</keyword>
<keyword id="KW-0645">Protease</keyword>
<keyword id="KW-0812">Transmembrane</keyword>
<keyword id="KW-1133">Transmembrane helix</keyword>
<keyword id="KW-0862">Zinc</keyword>
<accession>A1TV68</accession>
<sequence>MKRIALFLLTNLAVVVVLGIVASLLGVNRYLTANGLNLGALLGFAFIMGFGGAIISLLMSKPIAKWSSGVRVIDGTGSADEAWIVQTVRKFADQAGIGMPEVGIFEGDPNAFATGAFKNNALVAVSTGLLQGMTREEVEAVIGHEVAHIANGDMVTMTLIQGVMNTFVVFLSRVIGYAVDSFLRRNDENSSGPGIGYMVTTIVLDIVLGFLASMIVAWFSRQREFRADAGAARLMGRRQPMINALARLGGMHPAELPKGLQAMGIAGGIGKLFSTHPPIEERIAALQNAQG</sequence>
<dbReference type="EC" id="3.4.24.-" evidence="1"/>
<dbReference type="EMBL" id="CP000512">
    <property type="protein sequence ID" value="ABM34856.1"/>
    <property type="molecule type" value="Genomic_DNA"/>
</dbReference>
<dbReference type="RefSeq" id="WP_011797329.1">
    <property type="nucleotide sequence ID" value="NC_008752.1"/>
</dbReference>
<dbReference type="SMR" id="A1TV68"/>
<dbReference type="STRING" id="397945.Aave_4316"/>
<dbReference type="MEROPS" id="M48.002"/>
<dbReference type="GeneID" id="34238798"/>
<dbReference type="GeneID" id="79789290"/>
<dbReference type="KEGG" id="aav:Aave_4316"/>
<dbReference type="eggNOG" id="COG0501">
    <property type="taxonomic scope" value="Bacteria"/>
</dbReference>
<dbReference type="HOGENOM" id="CLU_042266_1_0_4"/>
<dbReference type="OrthoDB" id="15218at2"/>
<dbReference type="Proteomes" id="UP000002596">
    <property type="component" value="Chromosome"/>
</dbReference>
<dbReference type="GO" id="GO:0005886">
    <property type="term" value="C:plasma membrane"/>
    <property type="evidence" value="ECO:0007669"/>
    <property type="project" value="UniProtKB-SubCell"/>
</dbReference>
<dbReference type="GO" id="GO:0004222">
    <property type="term" value="F:metalloendopeptidase activity"/>
    <property type="evidence" value="ECO:0007669"/>
    <property type="project" value="UniProtKB-UniRule"/>
</dbReference>
<dbReference type="GO" id="GO:0008270">
    <property type="term" value="F:zinc ion binding"/>
    <property type="evidence" value="ECO:0007669"/>
    <property type="project" value="UniProtKB-UniRule"/>
</dbReference>
<dbReference type="GO" id="GO:0006508">
    <property type="term" value="P:proteolysis"/>
    <property type="evidence" value="ECO:0007669"/>
    <property type="project" value="UniProtKB-KW"/>
</dbReference>
<dbReference type="CDD" id="cd07335">
    <property type="entry name" value="M48B_HtpX_like"/>
    <property type="match status" value="1"/>
</dbReference>
<dbReference type="Gene3D" id="3.30.2010.10">
    <property type="entry name" value="Metalloproteases ('zincins'), catalytic domain"/>
    <property type="match status" value="1"/>
</dbReference>
<dbReference type="HAMAP" id="MF_00188">
    <property type="entry name" value="Pept_M48_protease_HtpX"/>
    <property type="match status" value="1"/>
</dbReference>
<dbReference type="InterPro" id="IPR050083">
    <property type="entry name" value="HtpX_protease"/>
</dbReference>
<dbReference type="InterPro" id="IPR022919">
    <property type="entry name" value="Pept_M48_protease_HtpX"/>
</dbReference>
<dbReference type="InterPro" id="IPR001915">
    <property type="entry name" value="Peptidase_M48"/>
</dbReference>
<dbReference type="NCBIfam" id="NF003965">
    <property type="entry name" value="PRK05457.1"/>
    <property type="match status" value="1"/>
</dbReference>
<dbReference type="PANTHER" id="PTHR43221">
    <property type="entry name" value="PROTEASE HTPX"/>
    <property type="match status" value="1"/>
</dbReference>
<dbReference type="PANTHER" id="PTHR43221:SF1">
    <property type="entry name" value="PROTEASE HTPX"/>
    <property type="match status" value="1"/>
</dbReference>
<dbReference type="Pfam" id="PF01435">
    <property type="entry name" value="Peptidase_M48"/>
    <property type="match status" value="1"/>
</dbReference>
<gene>
    <name evidence="1" type="primary">htpX</name>
    <name type="ordered locus">Aave_4316</name>
</gene>
<evidence type="ECO:0000255" key="1">
    <source>
        <dbReference type="HAMAP-Rule" id="MF_00188"/>
    </source>
</evidence>
<comment type="cofactor">
    <cofactor evidence="1">
        <name>Zn(2+)</name>
        <dbReference type="ChEBI" id="CHEBI:29105"/>
    </cofactor>
    <text evidence="1">Binds 1 zinc ion per subunit.</text>
</comment>
<comment type="subcellular location">
    <subcellularLocation>
        <location evidence="1">Cell inner membrane</location>
        <topology evidence="1">Multi-pass membrane protein</topology>
    </subcellularLocation>
</comment>
<comment type="similarity">
    <text evidence="1">Belongs to the peptidase M48B family.</text>
</comment>
<proteinExistence type="inferred from homology"/>
<feature type="chain" id="PRO_1000020834" description="Protease HtpX homolog">
    <location>
        <begin position="1"/>
        <end position="291"/>
    </location>
</feature>
<feature type="transmembrane region" description="Helical" evidence="1">
    <location>
        <begin position="4"/>
        <end position="24"/>
    </location>
</feature>
<feature type="transmembrane region" description="Helical" evidence="1">
    <location>
        <begin position="38"/>
        <end position="58"/>
    </location>
</feature>
<feature type="transmembrane region" description="Helical" evidence="1">
    <location>
        <begin position="159"/>
        <end position="179"/>
    </location>
</feature>
<feature type="transmembrane region" description="Helical" evidence="1">
    <location>
        <begin position="199"/>
        <end position="219"/>
    </location>
</feature>
<feature type="active site" evidence="1">
    <location>
        <position position="145"/>
    </location>
</feature>
<feature type="binding site" evidence="1">
    <location>
        <position position="144"/>
    </location>
    <ligand>
        <name>Zn(2+)</name>
        <dbReference type="ChEBI" id="CHEBI:29105"/>
        <note>catalytic</note>
    </ligand>
</feature>
<feature type="binding site" evidence="1">
    <location>
        <position position="148"/>
    </location>
    <ligand>
        <name>Zn(2+)</name>
        <dbReference type="ChEBI" id="CHEBI:29105"/>
        <note>catalytic</note>
    </ligand>
</feature>
<feature type="binding site" evidence="1">
    <location>
        <position position="224"/>
    </location>
    <ligand>
        <name>Zn(2+)</name>
        <dbReference type="ChEBI" id="CHEBI:29105"/>
        <note>catalytic</note>
    </ligand>
</feature>
<protein>
    <recommendedName>
        <fullName evidence="1">Protease HtpX homolog</fullName>
        <ecNumber evidence="1">3.4.24.-</ecNumber>
    </recommendedName>
</protein>
<name>HTPX_PARC0</name>